<dbReference type="GO" id="GO:0005576">
    <property type="term" value="C:extracellular region"/>
    <property type="evidence" value="ECO:0007669"/>
    <property type="project" value="UniProtKB-SubCell"/>
</dbReference>
<dbReference type="GO" id="GO:0008289">
    <property type="term" value="F:lipid binding"/>
    <property type="evidence" value="ECO:0007669"/>
    <property type="project" value="UniProtKB-KW"/>
</dbReference>
<dbReference type="GO" id="GO:0046872">
    <property type="term" value="F:metal ion binding"/>
    <property type="evidence" value="ECO:0007669"/>
    <property type="project" value="UniProtKB-KW"/>
</dbReference>
<reference key="1">
    <citation type="journal article" date="1997" name="Comp. Biochem. Physiol.">
        <title>Purification and partial amino acid sequences of two distinct albumins from turtle plasma.</title>
        <authorList>
            <person name="Brown M.A."/>
            <person name="Chambers G.K."/>
            <person name="Licht P."/>
        </authorList>
    </citation>
    <scope>PROTEIN SEQUENCE</scope>
</reference>
<protein>
    <recommendedName>
        <fullName>68 kDa serum albumin</fullName>
    </recommendedName>
    <alternativeName>
        <fullName>Alb-2</fullName>
    </alternativeName>
</protein>
<sequence>DVDETHTLGHXFXEL</sequence>
<comment type="function">
    <text>Serum albumin, the main protein of plasma, has a good binding capacity for water, Ca(2+), Na(+), K(+), fatty acids, hormones, bilirubin and drugs. Its main function is the regulation of the colloidal osmotic pressure of blood.</text>
</comment>
<comment type="subcellular location">
    <subcellularLocation>
        <location>Secreted</location>
    </subcellularLocation>
</comment>
<comment type="tissue specificity">
    <text>Plasma.</text>
</comment>
<comment type="miscellaneous">
    <text>In the red-eared slider turtle, there are two forms of albumin, ALB-1 and ALB-2.</text>
</comment>
<comment type="similarity">
    <text evidence="1">Belongs to the ALB/AFP/VDB family.</text>
</comment>
<proteinExistence type="evidence at protein level"/>
<keyword id="KW-0903">Direct protein sequencing</keyword>
<keyword id="KW-0446">Lipid-binding</keyword>
<keyword id="KW-0479">Metal-binding</keyword>
<keyword id="KW-0964">Secreted</keyword>
<organism>
    <name type="scientific">Trachemys scripta</name>
    <name type="common">Red-eared slider turtle</name>
    <name type="synonym">Pseudemys scripta</name>
    <dbReference type="NCBI Taxonomy" id="34903"/>
    <lineage>
        <taxon>Eukaryota</taxon>
        <taxon>Metazoa</taxon>
        <taxon>Chordata</taxon>
        <taxon>Craniata</taxon>
        <taxon>Vertebrata</taxon>
        <taxon>Euteleostomi</taxon>
        <taxon>Archelosauria</taxon>
        <taxon>Testudinata</taxon>
        <taxon>Testudines</taxon>
        <taxon>Cryptodira</taxon>
        <taxon>Durocryptodira</taxon>
        <taxon>Testudinoidea</taxon>
        <taxon>Emydidae</taxon>
        <taxon>Trachemys</taxon>
    </lineage>
</organism>
<accession>P81189</accession>
<feature type="chain" id="PRO_0000135618" description="68 kDa serum albumin">
    <location>
        <begin position="1"/>
        <end position="15" status="greater than"/>
    </location>
</feature>
<feature type="non-terminal residue">
    <location>
        <position position="15"/>
    </location>
</feature>
<name>ALBU2_TRASC</name>
<evidence type="ECO:0000305" key="1"/>